<keyword id="KW-0963">Cytoplasm</keyword>
<keyword id="KW-0378">Hydrolase</keyword>
<keyword id="KW-0645">Protease</keyword>
<keyword id="KW-0720">Serine protease</keyword>
<protein>
    <recommendedName>
        <fullName evidence="1">ATP-dependent Clp protease proteolytic subunit</fullName>
        <ecNumber evidence="1">3.4.21.92</ecNumber>
    </recommendedName>
    <alternativeName>
        <fullName evidence="1">Endopeptidase Clp</fullName>
    </alternativeName>
</protein>
<sequence length="196" mass="21578">MIPVVIEQTSRGERSYDIYSRLLKDRIIMLTGPIEDNMANSIIAQLLFLDAQDNTKDIYLYVNTPGGSVSAGLAIVDTMNFIKSDVQTIVMGMAASMGTIIASSGTKGKRFMLPNAEYMIHQPMGGTGGGTQQTDMAIAAEHLLKTRNNLEQILADNSGQPIEKVHVDAERDNWMSAQETLEYGFIDEIMTNNQLK</sequence>
<evidence type="ECO:0000255" key="1">
    <source>
        <dbReference type="HAMAP-Rule" id="MF_00444"/>
    </source>
</evidence>
<dbReference type="EC" id="3.4.21.92" evidence="1"/>
<dbReference type="EMBL" id="CP000419">
    <property type="protein sequence ID" value="ABJ65694.1"/>
    <property type="molecule type" value="Genomic_DNA"/>
</dbReference>
<dbReference type="RefSeq" id="WP_002949732.1">
    <property type="nucleotide sequence ID" value="NC_008532.1"/>
</dbReference>
<dbReference type="SMR" id="Q03M78"/>
<dbReference type="MEROPS" id="S14.001"/>
<dbReference type="KEGG" id="ste:STER_0395"/>
<dbReference type="HOGENOM" id="CLU_058707_3_2_9"/>
<dbReference type="GO" id="GO:0005737">
    <property type="term" value="C:cytoplasm"/>
    <property type="evidence" value="ECO:0007669"/>
    <property type="project" value="UniProtKB-SubCell"/>
</dbReference>
<dbReference type="GO" id="GO:0009368">
    <property type="term" value="C:endopeptidase Clp complex"/>
    <property type="evidence" value="ECO:0007669"/>
    <property type="project" value="TreeGrafter"/>
</dbReference>
<dbReference type="GO" id="GO:0004176">
    <property type="term" value="F:ATP-dependent peptidase activity"/>
    <property type="evidence" value="ECO:0007669"/>
    <property type="project" value="InterPro"/>
</dbReference>
<dbReference type="GO" id="GO:0051117">
    <property type="term" value="F:ATPase binding"/>
    <property type="evidence" value="ECO:0007669"/>
    <property type="project" value="TreeGrafter"/>
</dbReference>
<dbReference type="GO" id="GO:0004252">
    <property type="term" value="F:serine-type endopeptidase activity"/>
    <property type="evidence" value="ECO:0007669"/>
    <property type="project" value="UniProtKB-UniRule"/>
</dbReference>
<dbReference type="GO" id="GO:0006515">
    <property type="term" value="P:protein quality control for misfolded or incompletely synthesized proteins"/>
    <property type="evidence" value="ECO:0007669"/>
    <property type="project" value="TreeGrafter"/>
</dbReference>
<dbReference type="CDD" id="cd07017">
    <property type="entry name" value="S14_ClpP_2"/>
    <property type="match status" value="1"/>
</dbReference>
<dbReference type="FunFam" id="3.90.226.10:FF:000014">
    <property type="entry name" value="ATP-dependent Clp protease proteolytic subunit"/>
    <property type="match status" value="1"/>
</dbReference>
<dbReference type="Gene3D" id="3.90.226.10">
    <property type="entry name" value="2-enoyl-CoA Hydratase, Chain A, domain 1"/>
    <property type="match status" value="1"/>
</dbReference>
<dbReference type="HAMAP" id="MF_00444">
    <property type="entry name" value="ClpP"/>
    <property type="match status" value="1"/>
</dbReference>
<dbReference type="InterPro" id="IPR001907">
    <property type="entry name" value="ClpP"/>
</dbReference>
<dbReference type="InterPro" id="IPR029045">
    <property type="entry name" value="ClpP/crotonase-like_dom_sf"/>
</dbReference>
<dbReference type="InterPro" id="IPR023562">
    <property type="entry name" value="ClpP/TepA"/>
</dbReference>
<dbReference type="InterPro" id="IPR033135">
    <property type="entry name" value="ClpP_His_AS"/>
</dbReference>
<dbReference type="InterPro" id="IPR018215">
    <property type="entry name" value="ClpP_Ser_AS"/>
</dbReference>
<dbReference type="NCBIfam" id="NF001368">
    <property type="entry name" value="PRK00277.1"/>
    <property type="match status" value="1"/>
</dbReference>
<dbReference type="NCBIfam" id="NF009205">
    <property type="entry name" value="PRK12553.1"/>
    <property type="match status" value="1"/>
</dbReference>
<dbReference type="PANTHER" id="PTHR10381">
    <property type="entry name" value="ATP-DEPENDENT CLP PROTEASE PROTEOLYTIC SUBUNIT"/>
    <property type="match status" value="1"/>
</dbReference>
<dbReference type="PANTHER" id="PTHR10381:SF70">
    <property type="entry name" value="ATP-DEPENDENT CLP PROTEASE PROTEOLYTIC SUBUNIT"/>
    <property type="match status" value="1"/>
</dbReference>
<dbReference type="Pfam" id="PF00574">
    <property type="entry name" value="CLP_protease"/>
    <property type="match status" value="1"/>
</dbReference>
<dbReference type="PRINTS" id="PR00127">
    <property type="entry name" value="CLPPROTEASEP"/>
</dbReference>
<dbReference type="SUPFAM" id="SSF52096">
    <property type="entry name" value="ClpP/crotonase"/>
    <property type="match status" value="1"/>
</dbReference>
<dbReference type="PROSITE" id="PS00382">
    <property type="entry name" value="CLP_PROTEASE_HIS"/>
    <property type="match status" value="1"/>
</dbReference>
<dbReference type="PROSITE" id="PS00381">
    <property type="entry name" value="CLP_PROTEASE_SER"/>
    <property type="match status" value="1"/>
</dbReference>
<reference key="1">
    <citation type="journal article" date="2006" name="Proc. Natl. Acad. Sci. U.S.A.">
        <title>Comparative genomics of the lactic acid bacteria.</title>
        <authorList>
            <person name="Makarova K.S."/>
            <person name="Slesarev A."/>
            <person name="Wolf Y.I."/>
            <person name="Sorokin A."/>
            <person name="Mirkin B."/>
            <person name="Koonin E.V."/>
            <person name="Pavlov A."/>
            <person name="Pavlova N."/>
            <person name="Karamychev V."/>
            <person name="Polouchine N."/>
            <person name="Shakhova V."/>
            <person name="Grigoriev I."/>
            <person name="Lou Y."/>
            <person name="Rohksar D."/>
            <person name="Lucas S."/>
            <person name="Huang K."/>
            <person name="Goodstein D.M."/>
            <person name="Hawkins T."/>
            <person name="Plengvidhya V."/>
            <person name="Welker D."/>
            <person name="Hughes J."/>
            <person name="Goh Y."/>
            <person name="Benson A."/>
            <person name="Baldwin K."/>
            <person name="Lee J.-H."/>
            <person name="Diaz-Muniz I."/>
            <person name="Dosti B."/>
            <person name="Smeianov V."/>
            <person name="Wechter W."/>
            <person name="Barabote R."/>
            <person name="Lorca G."/>
            <person name="Altermann E."/>
            <person name="Barrangou R."/>
            <person name="Ganesan B."/>
            <person name="Xie Y."/>
            <person name="Rawsthorne H."/>
            <person name="Tamir D."/>
            <person name="Parker C."/>
            <person name="Breidt F."/>
            <person name="Broadbent J.R."/>
            <person name="Hutkins R."/>
            <person name="O'Sullivan D."/>
            <person name="Steele J."/>
            <person name="Unlu G."/>
            <person name="Saier M.H. Jr."/>
            <person name="Klaenhammer T."/>
            <person name="Richardson P."/>
            <person name="Kozyavkin S."/>
            <person name="Weimer B.C."/>
            <person name="Mills D.A."/>
        </authorList>
    </citation>
    <scope>NUCLEOTIDE SEQUENCE [LARGE SCALE GENOMIC DNA]</scope>
    <source>
        <strain>ATCC BAA-491 / LMD-9</strain>
    </source>
</reference>
<gene>
    <name evidence="1" type="primary">clpP</name>
    <name type="ordered locus">STER_0395</name>
</gene>
<organism>
    <name type="scientific">Streptococcus thermophilus (strain ATCC BAA-491 / LMD-9)</name>
    <dbReference type="NCBI Taxonomy" id="322159"/>
    <lineage>
        <taxon>Bacteria</taxon>
        <taxon>Bacillati</taxon>
        <taxon>Bacillota</taxon>
        <taxon>Bacilli</taxon>
        <taxon>Lactobacillales</taxon>
        <taxon>Streptococcaceae</taxon>
        <taxon>Streptococcus</taxon>
    </lineage>
</organism>
<proteinExistence type="inferred from homology"/>
<accession>Q03M78</accession>
<comment type="function">
    <text evidence="1">Cleaves peptides in various proteins in a process that requires ATP hydrolysis. Has a chymotrypsin-like activity. Plays a major role in the degradation of misfolded proteins.</text>
</comment>
<comment type="catalytic activity">
    <reaction evidence="1">
        <text>Hydrolysis of proteins to small peptides in the presence of ATP and magnesium. alpha-casein is the usual test substrate. In the absence of ATP, only oligopeptides shorter than five residues are hydrolyzed (such as succinyl-Leu-Tyr-|-NHMec, and Leu-Tyr-Leu-|-Tyr-Trp, in which cleavage of the -Tyr-|-Leu- and -Tyr-|-Trp bonds also occurs).</text>
        <dbReference type="EC" id="3.4.21.92"/>
    </reaction>
</comment>
<comment type="subunit">
    <text evidence="1">Fourteen ClpP subunits assemble into 2 heptameric rings which stack back to back to give a disk-like structure with a central cavity, resembling the structure of eukaryotic proteasomes.</text>
</comment>
<comment type="subcellular location">
    <subcellularLocation>
        <location evidence="1">Cytoplasm</location>
    </subcellularLocation>
</comment>
<comment type="similarity">
    <text evidence="1">Belongs to the peptidase S14 family.</text>
</comment>
<name>CLPP_STRTD</name>
<feature type="chain" id="PRO_1000026138" description="ATP-dependent Clp protease proteolytic subunit">
    <location>
        <begin position="1"/>
        <end position="196"/>
    </location>
</feature>
<feature type="active site" description="Nucleophile" evidence="1">
    <location>
        <position position="96"/>
    </location>
</feature>
<feature type="active site" evidence="1">
    <location>
        <position position="121"/>
    </location>
</feature>